<keyword id="KW-0067">ATP-binding</keyword>
<keyword id="KW-0963">Cytoplasm</keyword>
<keyword id="KW-0238">DNA-binding</keyword>
<keyword id="KW-0413">Isomerase</keyword>
<keyword id="KW-0547">Nucleotide-binding</keyword>
<keyword id="KW-1185">Reference proteome</keyword>
<keyword id="KW-0799">Topoisomerase</keyword>
<feature type="chain" id="PRO_0000409825" description="DNA gyrase subunit A">
    <location>
        <begin position="1"/>
        <end position="940"/>
    </location>
</feature>
<feature type="domain" description="Topo IIA-type catalytic" evidence="2">
    <location>
        <begin position="48"/>
        <end position="538"/>
    </location>
</feature>
<feature type="region of interest" description="Disordered" evidence="3">
    <location>
        <begin position="1"/>
        <end position="22"/>
    </location>
</feature>
<feature type="region of interest" description="Disordered" evidence="3">
    <location>
        <begin position="914"/>
        <end position="940"/>
    </location>
</feature>
<feature type="short sequence motif" description="GyrA-box" evidence="1">
    <location>
        <begin position="565"/>
        <end position="571"/>
    </location>
</feature>
<feature type="compositionally biased region" description="Acidic residues" evidence="3">
    <location>
        <begin position="914"/>
        <end position="924"/>
    </location>
</feature>
<feature type="active site" description="O-(5'-phospho-DNA)-tyrosine intermediate" evidence="1">
    <location>
        <position position="136"/>
    </location>
</feature>
<sequence>MSDHTNPPSAPPDDDPNGGSLLMPVTLEEEMSRSYLDYAMSVIVSRALPDARDGLKPVHRRILYGMQESGYTADKPYRKSARINGDVMGKYHPHGDAAIYDALVRLAQPFSLRVPLIDGQGNFGSMDGDPAAAPRYTEARLARSASFLLNDIDRDTVDFQPNYDDSEMEPRVLPASYPNLLVNGADGIAVGMATKIPTHNPTEVIDATLAMIDNPDITLDELMTVIPGPDFPTGGLILGRSGIRSAFETGKGSITVRARTDFEEVRGGRQAIVISEIPYQVNKATLQERMAELVRAKQIEGISDIRDESDRSGVRVVIELKRDATPDVVLNHLFRFTQLQISYGINMLALDGGQPRLMGLRDVLSTFIRFREDVILRRARFELNKARDRAHLLVGLAIAVANIDEVIRLIRQSPDSTSARIALMERDWPAADVAPLLTLIDDGGNVLTEAQTVRLTEVQARGILELRLQRLTGLERDKIHNEMQEVAARIGELLEIIGSHIRRMEVMREELAVIRAELNSPRRSEINDSLADQDDESLIEPGQMVVTITRDGFIKRTPLDVFRQQHRGGRGRAAASMRGDDIVTRSFNAHTHQWVLFFSSGGKAYRQKVWRLPEAGPTAKGRALVNLLPELGSDGITAVLPLPQDESLWEGLHLVFATASGGIRRNRLSDFKNVRASGLIAMKLDEGDRLIGVATCREGDDIMLASRLGRCIRFQANEDTLRVFAGRESSGVRGMKLAQGDEVISLSVLRHVEATPEERAAYLRYASARRRSAAGEEDQIDAEVMEADDSEVTVDDTALSPERIAGLEEAEEFLLTVTIAGFGKRSSAYDYRVSGRGGQGIANINLAPRNGRAVAATFPVRPGDDVMLVTDAGRLIRVPADQVRITGRSTMGVTLFRVDKDEVVTSVFPVLETESVDDNGDDADSVAPAAPDGQVTDSDD</sequence>
<dbReference type="EC" id="5.6.2.2" evidence="1"/>
<dbReference type="EMBL" id="CP000394">
    <property type="protein sequence ID" value="ABI62117.1"/>
    <property type="molecule type" value="Genomic_DNA"/>
</dbReference>
<dbReference type="SMR" id="Q0BST5"/>
<dbReference type="STRING" id="391165.GbCGDNIH1_1219"/>
<dbReference type="KEGG" id="gbe:GbCGDNIH1_1219"/>
<dbReference type="eggNOG" id="COG0188">
    <property type="taxonomic scope" value="Bacteria"/>
</dbReference>
<dbReference type="HOGENOM" id="CLU_002977_6_1_5"/>
<dbReference type="Proteomes" id="UP000001963">
    <property type="component" value="Chromosome"/>
</dbReference>
<dbReference type="GO" id="GO:0005694">
    <property type="term" value="C:chromosome"/>
    <property type="evidence" value="ECO:0007669"/>
    <property type="project" value="InterPro"/>
</dbReference>
<dbReference type="GO" id="GO:0005737">
    <property type="term" value="C:cytoplasm"/>
    <property type="evidence" value="ECO:0007669"/>
    <property type="project" value="UniProtKB-SubCell"/>
</dbReference>
<dbReference type="GO" id="GO:0009330">
    <property type="term" value="C:DNA topoisomerase type II (double strand cut, ATP-hydrolyzing) complex"/>
    <property type="evidence" value="ECO:0007669"/>
    <property type="project" value="TreeGrafter"/>
</dbReference>
<dbReference type="GO" id="GO:0005524">
    <property type="term" value="F:ATP binding"/>
    <property type="evidence" value="ECO:0007669"/>
    <property type="project" value="UniProtKB-UniRule"/>
</dbReference>
<dbReference type="GO" id="GO:0003677">
    <property type="term" value="F:DNA binding"/>
    <property type="evidence" value="ECO:0007669"/>
    <property type="project" value="UniProtKB-UniRule"/>
</dbReference>
<dbReference type="GO" id="GO:0034335">
    <property type="term" value="F:DNA negative supercoiling activity"/>
    <property type="evidence" value="ECO:0007669"/>
    <property type="project" value="UniProtKB-ARBA"/>
</dbReference>
<dbReference type="GO" id="GO:0006265">
    <property type="term" value="P:DNA topological change"/>
    <property type="evidence" value="ECO:0007669"/>
    <property type="project" value="UniProtKB-UniRule"/>
</dbReference>
<dbReference type="GO" id="GO:0006261">
    <property type="term" value="P:DNA-templated DNA replication"/>
    <property type="evidence" value="ECO:0007669"/>
    <property type="project" value="UniProtKB-UniRule"/>
</dbReference>
<dbReference type="CDD" id="cd00187">
    <property type="entry name" value="TOP4c"/>
    <property type="match status" value="1"/>
</dbReference>
<dbReference type="FunFam" id="1.10.268.10:FF:000001">
    <property type="entry name" value="DNA gyrase subunit A"/>
    <property type="match status" value="1"/>
</dbReference>
<dbReference type="FunFam" id="3.30.1360.40:FF:000002">
    <property type="entry name" value="DNA gyrase subunit A"/>
    <property type="match status" value="1"/>
</dbReference>
<dbReference type="FunFam" id="3.90.199.10:FF:000001">
    <property type="entry name" value="DNA gyrase subunit A"/>
    <property type="match status" value="1"/>
</dbReference>
<dbReference type="Gene3D" id="3.30.1360.40">
    <property type="match status" value="1"/>
</dbReference>
<dbReference type="Gene3D" id="2.120.10.90">
    <property type="entry name" value="DNA gyrase/topoisomerase IV, subunit A, C-terminal"/>
    <property type="match status" value="1"/>
</dbReference>
<dbReference type="Gene3D" id="3.90.199.10">
    <property type="entry name" value="Topoisomerase II, domain 5"/>
    <property type="match status" value="1"/>
</dbReference>
<dbReference type="Gene3D" id="1.10.268.10">
    <property type="entry name" value="Topoisomerase, domain 3"/>
    <property type="match status" value="1"/>
</dbReference>
<dbReference type="HAMAP" id="MF_01897">
    <property type="entry name" value="GyrA"/>
    <property type="match status" value="1"/>
</dbReference>
<dbReference type="InterPro" id="IPR005743">
    <property type="entry name" value="GyrA"/>
</dbReference>
<dbReference type="InterPro" id="IPR006691">
    <property type="entry name" value="GyrA/parC_rep"/>
</dbReference>
<dbReference type="InterPro" id="IPR035516">
    <property type="entry name" value="Gyrase/topoIV_suA_C"/>
</dbReference>
<dbReference type="InterPro" id="IPR013760">
    <property type="entry name" value="Topo_IIA-like_dom_sf"/>
</dbReference>
<dbReference type="InterPro" id="IPR013758">
    <property type="entry name" value="Topo_IIA_A/C_ab"/>
</dbReference>
<dbReference type="InterPro" id="IPR013757">
    <property type="entry name" value="Topo_IIA_A_a_sf"/>
</dbReference>
<dbReference type="InterPro" id="IPR002205">
    <property type="entry name" value="Topo_IIA_dom_A"/>
</dbReference>
<dbReference type="InterPro" id="IPR050220">
    <property type="entry name" value="Type_II_DNA_Topoisomerases"/>
</dbReference>
<dbReference type="NCBIfam" id="TIGR01063">
    <property type="entry name" value="gyrA"/>
    <property type="match status" value="1"/>
</dbReference>
<dbReference type="NCBIfam" id="NF004043">
    <property type="entry name" value="PRK05560.1"/>
    <property type="match status" value="1"/>
</dbReference>
<dbReference type="NCBIfam" id="NF004044">
    <property type="entry name" value="PRK05561.1"/>
    <property type="match status" value="1"/>
</dbReference>
<dbReference type="PANTHER" id="PTHR43493:SF5">
    <property type="entry name" value="DNA GYRASE SUBUNIT A, CHLOROPLASTIC_MITOCHONDRIAL"/>
    <property type="match status" value="1"/>
</dbReference>
<dbReference type="PANTHER" id="PTHR43493">
    <property type="entry name" value="DNA GYRASE/TOPOISOMERASE SUBUNIT A"/>
    <property type="match status" value="1"/>
</dbReference>
<dbReference type="Pfam" id="PF03989">
    <property type="entry name" value="DNA_gyraseA_C"/>
    <property type="match status" value="6"/>
</dbReference>
<dbReference type="Pfam" id="PF00521">
    <property type="entry name" value="DNA_topoisoIV"/>
    <property type="match status" value="1"/>
</dbReference>
<dbReference type="SMART" id="SM00434">
    <property type="entry name" value="TOP4c"/>
    <property type="match status" value="1"/>
</dbReference>
<dbReference type="SUPFAM" id="SSF101904">
    <property type="entry name" value="GyrA/ParC C-terminal domain-like"/>
    <property type="match status" value="1"/>
</dbReference>
<dbReference type="SUPFAM" id="SSF56719">
    <property type="entry name" value="Type II DNA topoisomerase"/>
    <property type="match status" value="1"/>
</dbReference>
<dbReference type="PROSITE" id="PS52040">
    <property type="entry name" value="TOPO_IIA"/>
    <property type="match status" value="1"/>
</dbReference>
<protein>
    <recommendedName>
        <fullName evidence="1">DNA gyrase subunit A</fullName>
        <ecNumber evidence="1">5.6.2.2</ecNumber>
    </recommendedName>
</protein>
<proteinExistence type="inferred from homology"/>
<evidence type="ECO:0000255" key="1">
    <source>
        <dbReference type="HAMAP-Rule" id="MF_01897"/>
    </source>
</evidence>
<evidence type="ECO:0000255" key="2">
    <source>
        <dbReference type="PROSITE-ProRule" id="PRU01384"/>
    </source>
</evidence>
<evidence type="ECO:0000256" key="3">
    <source>
        <dbReference type="SAM" id="MobiDB-lite"/>
    </source>
</evidence>
<reference key="1">
    <citation type="journal article" date="2007" name="J. Bacteriol.">
        <title>Genome sequence analysis of the emerging human pathogenic acetic acid bacterium Granulibacter bethesdensis.</title>
        <authorList>
            <person name="Greenberg D.E."/>
            <person name="Porcella S.F."/>
            <person name="Zelazny A.M."/>
            <person name="Virtaneva K."/>
            <person name="Sturdevant D.E."/>
            <person name="Kupko J.J. III"/>
            <person name="Barbian K.D."/>
            <person name="Babar A."/>
            <person name="Dorward D.W."/>
            <person name="Holland S.M."/>
        </authorList>
    </citation>
    <scope>NUCLEOTIDE SEQUENCE [LARGE SCALE GENOMIC DNA]</scope>
    <source>
        <strain>ATCC BAA-1260 / CGDNIH1</strain>
    </source>
</reference>
<organism>
    <name type="scientific">Granulibacter bethesdensis (strain ATCC BAA-1260 / CGDNIH1)</name>
    <dbReference type="NCBI Taxonomy" id="391165"/>
    <lineage>
        <taxon>Bacteria</taxon>
        <taxon>Pseudomonadati</taxon>
        <taxon>Pseudomonadota</taxon>
        <taxon>Alphaproteobacteria</taxon>
        <taxon>Acetobacterales</taxon>
        <taxon>Acetobacteraceae</taxon>
        <taxon>Granulibacter</taxon>
    </lineage>
</organism>
<gene>
    <name evidence="1" type="primary">gyrA</name>
    <name type="ordered locus">GbCGDNIH1_1219</name>
</gene>
<name>GYRA_GRABC</name>
<comment type="function">
    <text evidence="1">A type II topoisomerase that negatively supercoils closed circular double-stranded (ds) DNA in an ATP-dependent manner to modulate DNA topology and maintain chromosomes in an underwound state. Negative supercoiling favors strand separation, and DNA replication, transcription, recombination and repair, all of which involve strand separation. Also able to catalyze the interconversion of other topological isomers of dsDNA rings, including catenanes and knotted rings. Type II topoisomerases break and join 2 DNA strands simultaneously in an ATP-dependent manner.</text>
</comment>
<comment type="catalytic activity">
    <reaction evidence="1">
        <text>ATP-dependent breakage, passage and rejoining of double-stranded DNA.</text>
        <dbReference type="EC" id="5.6.2.2"/>
    </reaction>
</comment>
<comment type="subunit">
    <text evidence="1">Heterotetramer, composed of two GyrA and two GyrB chains. In the heterotetramer, GyrA contains the active site tyrosine that forms a transient covalent intermediate with DNA, while GyrB binds cofactors and catalyzes ATP hydrolysis.</text>
</comment>
<comment type="subcellular location">
    <subcellularLocation>
        <location evidence="1">Cytoplasm</location>
    </subcellularLocation>
</comment>
<comment type="miscellaneous">
    <text evidence="1">Few gyrases are as efficient as E.coli at forming negative supercoils. Not all organisms have 2 type II topoisomerases; in organisms with a single type II topoisomerase this enzyme also has to decatenate newly replicated chromosomes.</text>
</comment>
<comment type="similarity">
    <text evidence="1">Belongs to the type II topoisomerase GyrA/ParC subunit family.</text>
</comment>
<accession>Q0BST5</accession>